<sequence length="208" mass="22632">MAFDEEWIPKTRLGKLVMEGQVASMEEAIKSGLPIREPQIIDMLLPDLEDEVLDINMVQRMTDSGRRVKFRATVIVGNRNGYVGLGQAKDVQVGPAIRKAIDAAKLDITYIHRGCGSWECACGLPHTVPYEVTGKAGSVSVTLIPAPRGLGIAAGNTATKVLEKAGIKDVWTKTFGTTRSTLNFAKATFDALNQVNVMRLPVYCKEEA</sequence>
<evidence type="ECO:0000255" key="1">
    <source>
        <dbReference type="HAMAP-Rule" id="MF_01307"/>
    </source>
</evidence>
<evidence type="ECO:0000305" key="2"/>
<proteinExistence type="inferred from homology"/>
<organism>
    <name type="scientific">Methanosarcina barkeri (strain Fusaro / DSM 804)</name>
    <dbReference type="NCBI Taxonomy" id="269797"/>
    <lineage>
        <taxon>Archaea</taxon>
        <taxon>Methanobacteriati</taxon>
        <taxon>Methanobacteriota</taxon>
        <taxon>Stenosarchaea group</taxon>
        <taxon>Methanomicrobia</taxon>
        <taxon>Methanosarcinales</taxon>
        <taxon>Methanosarcinaceae</taxon>
        <taxon>Methanosarcina</taxon>
    </lineage>
</organism>
<comment type="function">
    <text evidence="1">With S4 and S12 plays an important role in translational accuracy.</text>
</comment>
<comment type="subunit">
    <text evidence="1">Part of the 30S ribosomal subunit. Contacts protein S4.</text>
</comment>
<comment type="domain">
    <text>The N-terminal domain interacts with the head of the 30S subunit; the C-terminal domain interacts with the body and contacts protein S4. The interaction surface between S4 and S5 is involved in control of translational fidelity.</text>
</comment>
<comment type="similarity">
    <text evidence="1">Belongs to the universal ribosomal protein uS5 family.</text>
</comment>
<protein>
    <recommendedName>
        <fullName evidence="1">Small ribosomal subunit protein uS5</fullName>
    </recommendedName>
    <alternativeName>
        <fullName evidence="2">30S ribosomal protein S5</fullName>
    </alternativeName>
</protein>
<feature type="chain" id="PRO_0000230383" description="Small ribosomal subunit protein uS5">
    <location>
        <begin position="1"/>
        <end position="208"/>
    </location>
</feature>
<feature type="domain" description="S5 DRBM" evidence="1">
    <location>
        <begin position="48"/>
        <end position="111"/>
    </location>
</feature>
<name>RS5_METBF</name>
<dbReference type="EMBL" id="CP000099">
    <property type="protein sequence ID" value="AAZ69077.1"/>
    <property type="molecule type" value="Genomic_DNA"/>
</dbReference>
<dbReference type="SMR" id="Q46GB5"/>
<dbReference type="STRING" id="269797.Mbar_A0090"/>
<dbReference type="PaxDb" id="269797-Mbar_A0090"/>
<dbReference type="KEGG" id="mba:Mbar_A0090"/>
<dbReference type="eggNOG" id="arCOG04087">
    <property type="taxonomic scope" value="Archaea"/>
</dbReference>
<dbReference type="HOGENOM" id="CLU_065898_0_1_2"/>
<dbReference type="OrthoDB" id="38155at2157"/>
<dbReference type="GO" id="GO:0022627">
    <property type="term" value="C:cytosolic small ribosomal subunit"/>
    <property type="evidence" value="ECO:0007669"/>
    <property type="project" value="TreeGrafter"/>
</dbReference>
<dbReference type="GO" id="GO:0019843">
    <property type="term" value="F:rRNA binding"/>
    <property type="evidence" value="ECO:0007669"/>
    <property type="project" value="UniProtKB-UniRule"/>
</dbReference>
<dbReference type="GO" id="GO:0003735">
    <property type="term" value="F:structural constituent of ribosome"/>
    <property type="evidence" value="ECO:0007669"/>
    <property type="project" value="InterPro"/>
</dbReference>
<dbReference type="GO" id="GO:0006412">
    <property type="term" value="P:translation"/>
    <property type="evidence" value="ECO:0007669"/>
    <property type="project" value="UniProtKB-UniRule"/>
</dbReference>
<dbReference type="FunFam" id="3.30.160.20:FF:000002">
    <property type="entry name" value="40S ribosomal protein S2"/>
    <property type="match status" value="1"/>
</dbReference>
<dbReference type="FunFam" id="3.30.230.10:FF:000004">
    <property type="entry name" value="40S ribosomal protein S2"/>
    <property type="match status" value="1"/>
</dbReference>
<dbReference type="Gene3D" id="3.30.160.20">
    <property type="match status" value="1"/>
</dbReference>
<dbReference type="Gene3D" id="3.30.230.10">
    <property type="match status" value="1"/>
</dbReference>
<dbReference type="HAMAP" id="MF_01307_A">
    <property type="entry name" value="Ribosomal_uS5_A"/>
    <property type="match status" value="1"/>
</dbReference>
<dbReference type="InterPro" id="IPR020568">
    <property type="entry name" value="Ribosomal_Su5_D2-typ_SF"/>
</dbReference>
<dbReference type="InterPro" id="IPR000851">
    <property type="entry name" value="Ribosomal_uS5"/>
</dbReference>
<dbReference type="InterPro" id="IPR047866">
    <property type="entry name" value="Ribosomal_uS5_arc"/>
</dbReference>
<dbReference type="InterPro" id="IPR005324">
    <property type="entry name" value="Ribosomal_uS5_C"/>
</dbReference>
<dbReference type="InterPro" id="IPR005711">
    <property type="entry name" value="Ribosomal_uS5_euk/arc"/>
</dbReference>
<dbReference type="InterPro" id="IPR013810">
    <property type="entry name" value="Ribosomal_uS5_N"/>
</dbReference>
<dbReference type="InterPro" id="IPR018192">
    <property type="entry name" value="Ribosomal_uS5_N_CS"/>
</dbReference>
<dbReference type="InterPro" id="IPR014721">
    <property type="entry name" value="Ribsml_uS5_D2-typ_fold_subgr"/>
</dbReference>
<dbReference type="NCBIfam" id="NF003125">
    <property type="entry name" value="PRK04044.1"/>
    <property type="match status" value="1"/>
</dbReference>
<dbReference type="NCBIfam" id="TIGR01020">
    <property type="entry name" value="uS5_euk_arch"/>
    <property type="match status" value="1"/>
</dbReference>
<dbReference type="PANTHER" id="PTHR13718:SF4">
    <property type="entry name" value="40S RIBOSOMAL PROTEIN S2"/>
    <property type="match status" value="1"/>
</dbReference>
<dbReference type="PANTHER" id="PTHR13718">
    <property type="entry name" value="RIBOSOMAL S SUBUNIT"/>
    <property type="match status" value="1"/>
</dbReference>
<dbReference type="Pfam" id="PF00333">
    <property type="entry name" value="Ribosomal_S5"/>
    <property type="match status" value="1"/>
</dbReference>
<dbReference type="Pfam" id="PF03719">
    <property type="entry name" value="Ribosomal_S5_C"/>
    <property type="match status" value="1"/>
</dbReference>
<dbReference type="SUPFAM" id="SSF54768">
    <property type="entry name" value="dsRNA-binding domain-like"/>
    <property type="match status" value="1"/>
</dbReference>
<dbReference type="SUPFAM" id="SSF54211">
    <property type="entry name" value="Ribosomal protein S5 domain 2-like"/>
    <property type="match status" value="1"/>
</dbReference>
<dbReference type="PROSITE" id="PS00585">
    <property type="entry name" value="RIBOSOMAL_S5"/>
    <property type="match status" value="1"/>
</dbReference>
<dbReference type="PROSITE" id="PS50881">
    <property type="entry name" value="S5_DSRBD"/>
    <property type="match status" value="1"/>
</dbReference>
<keyword id="KW-0687">Ribonucleoprotein</keyword>
<keyword id="KW-0689">Ribosomal protein</keyword>
<keyword id="KW-0694">RNA-binding</keyword>
<keyword id="KW-0699">rRNA-binding</keyword>
<accession>Q46GB5</accession>
<reference key="1">
    <citation type="journal article" date="2006" name="J. Bacteriol.">
        <title>The Methanosarcina barkeri genome: comparative analysis with Methanosarcina acetivorans and Methanosarcina mazei reveals extensive rearrangement within methanosarcinal genomes.</title>
        <authorList>
            <person name="Maeder D.L."/>
            <person name="Anderson I."/>
            <person name="Brettin T.S."/>
            <person name="Bruce D.C."/>
            <person name="Gilna P."/>
            <person name="Han C.S."/>
            <person name="Lapidus A."/>
            <person name="Metcalf W.W."/>
            <person name="Saunders E."/>
            <person name="Tapia R."/>
            <person name="Sowers K.R."/>
        </authorList>
    </citation>
    <scope>NUCLEOTIDE SEQUENCE [LARGE SCALE GENOMIC DNA]</scope>
    <source>
        <strain>Fusaro / DSM 804</strain>
    </source>
</reference>
<gene>
    <name evidence="1" type="primary">rps5</name>
    <name type="ordered locus">Mbar_A0090</name>
</gene>